<protein>
    <recommendedName>
        <fullName>Virion infectivity factor</fullName>
        <shortName>Vif</shortName>
    </recommendedName>
    <alternativeName>
        <fullName>Q protein</fullName>
    </alternativeName>
    <alternativeName>
        <fullName>SOR protein</fullName>
    </alternativeName>
</protein>
<evidence type="ECO:0000250" key="1"/>
<evidence type="ECO:0000305" key="2"/>
<keyword id="KW-0014">AIDS</keyword>
<keyword id="KW-1032">Host cell membrane</keyword>
<keyword id="KW-1035">Host cytoplasm</keyword>
<keyword id="KW-1043">Host membrane</keyword>
<keyword id="KW-0945">Host-virus interaction</keyword>
<keyword id="KW-0472">Membrane</keyword>
<keyword id="KW-0597">Phosphoprotein</keyword>
<keyword id="KW-0832">Ubl conjugation</keyword>
<keyword id="KW-0833">Ubl conjugation pathway</keyword>
<keyword id="KW-0946">Virion</keyword>
<sequence>MEEGKSWIAVPTWRVPGRMEKWHSLVKYLKYKTGDLEQVCYVPHHKVGWAWWTCSRVIFPLRGDSRLEIQAYWNLTPEKGWLSSYAVRMTWYTEKFWTDVTPDCADTLIHSTYFSCFTAGEVRRAIRGEKLLSCCKYPRAHRSQVPSLQFLALVVVQQNDRPQRDRTTRKQWRRDYRRGLRLARQDSRSYKQRGSESPAPGAYFPGVAKVLEILA</sequence>
<proteinExistence type="evidence at transcript level"/>
<name>VIF_HV2CA</name>
<organismHost>
    <name type="scientific">Homo sapiens</name>
    <name type="common">Human</name>
    <dbReference type="NCBI Taxonomy" id="9606"/>
</organismHost>
<dbReference type="EMBL" id="D00835">
    <property type="protein sequence ID" value="BAA00711.1"/>
    <property type="molecule type" value="Genomic_DNA"/>
</dbReference>
<dbReference type="PIR" id="C38475">
    <property type="entry name" value="ASLJCW"/>
</dbReference>
<dbReference type="SMR" id="P24108"/>
<dbReference type="Proteomes" id="UP000007421">
    <property type="component" value="Segment"/>
</dbReference>
<dbReference type="GO" id="GO:0030430">
    <property type="term" value="C:host cell cytoplasm"/>
    <property type="evidence" value="ECO:0007669"/>
    <property type="project" value="UniProtKB-SubCell"/>
</dbReference>
<dbReference type="GO" id="GO:0020002">
    <property type="term" value="C:host cell plasma membrane"/>
    <property type="evidence" value="ECO:0007669"/>
    <property type="project" value="UniProtKB-SubCell"/>
</dbReference>
<dbReference type="GO" id="GO:0016020">
    <property type="term" value="C:membrane"/>
    <property type="evidence" value="ECO:0007669"/>
    <property type="project" value="UniProtKB-KW"/>
</dbReference>
<dbReference type="GO" id="GO:0044423">
    <property type="term" value="C:virion component"/>
    <property type="evidence" value="ECO:0007669"/>
    <property type="project" value="UniProtKB-KW"/>
</dbReference>
<dbReference type="GO" id="GO:0019058">
    <property type="term" value="P:viral life cycle"/>
    <property type="evidence" value="ECO:0007669"/>
    <property type="project" value="InterPro"/>
</dbReference>
<dbReference type="InterPro" id="IPR000475">
    <property type="entry name" value="Vif"/>
</dbReference>
<dbReference type="Pfam" id="PF00559">
    <property type="entry name" value="Vif"/>
    <property type="match status" value="1"/>
</dbReference>
<dbReference type="PRINTS" id="PR00349">
    <property type="entry name" value="VIRIONINFFCT"/>
</dbReference>
<gene>
    <name type="primary">vif</name>
</gene>
<feature type="chain" id="PRO_0000085318" description="Virion infectivity factor">
    <location>
        <begin position="1"/>
        <end position="215"/>
    </location>
</feature>
<feature type="region of interest" description="Multimerization" evidence="1">
    <location>
        <begin position="154"/>
        <end position="167"/>
    </location>
</feature>
<feature type="short sequence motif" description="HCCH motif" evidence="1">
    <location>
        <begin position="110"/>
        <end position="141"/>
    </location>
</feature>
<feature type="short sequence motif" description="BC-box-like motif" evidence="1">
    <location>
        <begin position="147"/>
        <end position="156"/>
    </location>
</feature>
<feature type="modified residue" description="Phosphothreonine; by host MAP4K1" evidence="1">
    <location>
        <position position="98"/>
    </location>
</feature>
<feature type="modified residue" description="Phosphoserine; by host" evidence="1">
    <location>
        <position position="147"/>
    </location>
</feature>
<organism>
    <name type="scientific">Human immunodeficiency virus type 2 subtype A (isolate CAM2)</name>
    <name type="common">HIV-2</name>
    <dbReference type="NCBI Taxonomy" id="11715"/>
    <lineage>
        <taxon>Viruses</taxon>
        <taxon>Riboviria</taxon>
        <taxon>Pararnavirae</taxon>
        <taxon>Artverviricota</taxon>
        <taxon>Revtraviricetes</taxon>
        <taxon>Ortervirales</taxon>
        <taxon>Retroviridae</taxon>
        <taxon>Orthoretrovirinae</taxon>
        <taxon>Lentivirus</taxon>
        <taxon>Human immunodeficiency virus 2</taxon>
    </lineage>
</organism>
<comment type="function">
    <text evidence="1">Counteracts the innate antiviral activity of APOBEC3G. Forms a complex with host APOBEC3G thus preventing the entry of this lethally hypermutating enzyme into progeny virions. Functions as an adapter molecule, recruiting APOBEC3G to the ubiquitin-proteasome machinery. Targets APOBEC3G for degradation through the assembly with elongin BC complex, CUL5 and RBX1. Binds viral RNA and affects the stability of viral nucleoprotein core. May play a role in viral morphology (By similarity).</text>
</comment>
<comment type="subunit">
    <text evidence="1">Homomultimer; in vitro and presumably in vivo. Interacts with viral Pr55Gag precursor and human APOBEC3G. The interaction between Vif and APOBEC3G is species-specific, which may play a role in restricting the replication of HIV to humans. Forms an E3 ligase complex by interacting with human CUL5 and elongin BC complex (ELOB and ELOC) (By similarity).</text>
</comment>
<comment type="subcellular location">
    <subcellularLocation>
        <location evidence="1">Host cytoplasm</location>
    </subcellularLocation>
    <subcellularLocation>
        <location evidence="1">Host cell membrane</location>
        <topology evidence="1">Peripheral membrane protein</topology>
        <orientation evidence="1">Cytoplasmic side</orientation>
    </subcellularLocation>
    <subcellularLocation>
        <location evidence="1">Virion</location>
    </subcellularLocation>
    <text evidence="1">In the cytoplasm, seems to colocalize with intermediate filament vimentin. A fraction is associated with the cytoplasmic side of cellular membranes, presumably via the interaction with Pr55Gag precursor (By similarity).</text>
</comment>
<comment type="induction">
    <text>Expressed late during infection in a Rev-dependent manner.</text>
</comment>
<comment type="domain">
    <text evidence="1">The BC-like-box motif mediates the interaction with elongin BC complex.</text>
</comment>
<comment type="domain">
    <text evidence="1">The HCCH motif (H-x(5)-C-x(18)-C-x(5)-H) mediates the interaction with CUL5.</text>
</comment>
<comment type="PTM">
    <text evidence="1">Processed in virion by the viral protease.</text>
</comment>
<comment type="PTM">
    <text evidence="1">Highly phosphorylated on serine and threonine residues.</text>
</comment>
<comment type="PTM">
    <text evidence="1">Polyubiquitinated and degraded by the proteasome in the presence of APOBEC3G.</text>
</comment>
<comment type="miscellaneous">
    <text>Required for replication in 'nonpermissive' cells, including primary T-cells, macrophages and certain T-cell lines, but is dispensable for replication in 'permissive' cell lines, such as 293T cells. In nonpermissive cells, Vif-defective viruses can produce virions, but they fail to complete reverse transcription and cannot successfully infect new cells.</text>
</comment>
<comment type="miscellaneous">
    <text>Vif-defective viruses show catastrophic failure in reverse transcription due to APOBEC-induced mutations that initiate a DNA base repair pathway and compromise the structural integrity of the ssDNA. In the absence of Vif, the virion is morphologically abnormal.</text>
</comment>
<comment type="similarity">
    <text evidence="2">Belongs to the primate lentivirus group Vif protein family.</text>
</comment>
<accession>P24108</accession>
<reference key="1">
    <citation type="journal article" date="1991" name="J. Gen. Virol.">
        <title>Nucleotide sequence of a Guinea-Bissau-derived human immunodeficiency virus type 2 proviral clone (HIV-2CAM2).</title>
        <authorList>
            <person name="Tristem M."/>
            <person name="Hill F."/>
            <person name="Karpas A."/>
        </authorList>
    </citation>
    <scope>NUCLEOTIDE SEQUENCE [GENOMIC DNA]</scope>
</reference>